<organism>
    <name type="scientific">Escherichia coli O9:H4 (strain HS)</name>
    <dbReference type="NCBI Taxonomy" id="331112"/>
    <lineage>
        <taxon>Bacteria</taxon>
        <taxon>Pseudomonadati</taxon>
        <taxon>Pseudomonadota</taxon>
        <taxon>Gammaproteobacteria</taxon>
        <taxon>Enterobacterales</taxon>
        <taxon>Enterobacteriaceae</taxon>
        <taxon>Escherichia</taxon>
    </lineage>
</organism>
<proteinExistence type="inferred from homology"/>
<dbReference type="EMBL" id="CP000802">
    <property type="protein sequence ID" value="ABV04425.1"/>
    <property type="molecule type" value="Genomic_DNA"/>
</dbReference>
<dbReference type="RefSeq" id="WP_001274021.1">
    <property type="nucleotide sequence ID" value="NC_009800.1"/>
</dbReference>
<dbReference type="SMR" id="A7ZVX1"/>
<dbReference type="GeneID" id="93777413"/>
<dbReference type="KEGG" id="ecx:EcHS_A0025"/>
<dbReference type="HOGENOM" id="CLU_160655_4_0_6"/>
<dbReference type="GO" id="GO:0005829">
    <property type="term" value="C:cytosol"/>
    <property type="evidence" value="ECO:0007669"/>
    <property type="project" value="TreeGrafter"/>
</dbReference>
<dbReference type="GO" id="GO:0015935">
    <property type="term" value="C:small ribosomal subunit"/>
    <property type="evidence" value="ECO:0007669"/>
    <property type="project" value="TreeGrafter"/>
</dbReference>
<dbReference type="GO" id="GO:0070181">
    <property type="term" value="F:small ribosomal subunit rRNA binding"/>
    <property type="evidence" value="ECO:0007669"/>
    <property type="project" value="TreeGrafter"/>
</dbReference>
<dbReference type="GO" id="GO:0003735">
    <property type="term" value="F:structural constituent of ribosome"/>
    <property type="evidence" value="ECO:0007669"/>
    <property type="project" value="InterPro"/>
</dbReference>
<dbReference type="GO" id="GO:0006412">
    <property type="term" value="P:translation"/>
    <property type="evidence" value="ECO:0007669"/>
    <property type="project" value="UniProtKB-UniRule"/>
</dbReference>
<dbReference type="FunFam" id="1.20.58.110:FF:000001">
    <property type="entry name" value="30S ribosomal protein S20"/>
    <property type="match status" value="1"/>
</dbReference>
<dbReference type="Gene3D" id="1.20.58.110">
    <property type="entry name" value="Ribosomal protein S20"/>
    <property type="match status" value="1"/>
</dbReference>
<dbReference type="HAMAP" id="MF_00500">
    <property type="entry name" value="Ribosomal_bS20"/>
    <property type="match status" value="1"/>
</dbReference>
<dbReference type="InterPro" id="IPR002583">
    <property type="entry name" value="Ribosomal_bS20"/>
</dbReference>
<dbReference type="InterPro" id="IPR036510">
    <property type="entry name" value="Ribosomal_bS20_sf"/>
</dbReference>
<dbReference type="NCBIfam" id="TIGR00029">
    <property type="entry name" value="S20"/>
    <property type="match status" value="1"/>
</dbReference>
<dbReference type="PANTHER" id="PTHR33398">
    <property type="entry name" value="30S RIBOSOMAL PROTEIN S20"/>
    <property type="match status" value="1"/>
</dbReference>
<dbReference type="PANTHER" id="PTHR33398:SF1">
    <property type="entry name" value="SMALL RIBOSOMAL SUBUNIT PROTEIN BS20C"/>
    <property type="match status" value="1"/>
</dbReference>
<dbReference type="Pfam" id="PF01649">
    <property type="entry name" value="Ribosomal_S20p"/>
    <property type="match status" value="1"/>
</dbReference>
<dbReference type="SUPFAM" id="SSF46992">
    <property type="entry name" value="Ribosomal protein S20"/>
    <property type="match status" value="1"/>
</dbReference>
<gene>
    <name evidence="1" type="primary">rpsT</name>
    <name type="ordered locus">EcHS_A0025</name>
</gene>
<evidence type="ECO:0000255" key="1">
    <source>
        <dbReference type="HAMAP-Rule" id="MF_00500"/>
    </source>
</evidence>
<evidence type="ECO:0000256" key="2">
    <source>
        <dbReference type="SAM" id="MobiDB-lite"/>
    </source>
</evidence>
<evidence type="ECO:0000305" key="3"/>
<keyword id="KW-0687">Ribonucleoprotein</keyword>
<keyword id="KW-0689">Ribosomal protein</keyword>
<keyword id="KW-0694">RNA-binding</keyword>
<keyword id="KW-0699">rRNA-binding</keyword>
<name>RS20_ECOHS</name>
<sequence length="87" mass="9684">MANIKSAKKRAIQSEKARKHNASRRSMMRTFIKKVYAAIEAGDKAAAQKAFNEMQPIVDRQAAKGLIHKNKAARHKANLTAQINKLA</sequence>
<reference key="1">
    <citation type="journal article" date="2008" name="J. Bacteriol.">
        <title>The pangenome structure of Escherichia coli: comparative genomic analysis of E. coli commensal and pathogenic isolates.</title>
        <authorList>
            <person name="Rasko D.A."/>
            <person name="Rosovitz M.J."/>
            <person name="Myers G.S.A."/>
            <person name="Mongodin E.F."/>
            <person name="Fricke W.F."/>
            <person name="Gajer P."/>
            <person name="Crabtree J."/>
            <person name="Sebaihia M."/>
            <person name="Thomson N.R."/>
            <person name="Chaudhuri R."/>
            <person name="Henderson I.R."/>
            <person name="Sperandio V."/>
            <person name="Ravel J."/>
        </authorList>
    </citation>
    <scope>NUCLEOTIDE SEQUENCE [LARGE SCALE GENOMIC DNA]</scope>
    <source>
        <strain>HS</strain>
    </source>
</reference>
<feature type="chain" id="PRO_1000060491" description="Small ribosomal subunit protein bS20">
    <location>
        <begin position="1"/>
        <end position="87"/>
    </location>
</feature>
<feature type="region of interest" description="Disordered" evidence="2">
    <location>
        <begin position="1"/>
        <end position="26"/>
    </location>
</feature>
<accession>A7ZVX1</accession>
<comment type="function">
    <text evidence="1">Binds directly to 16S ribosomal RNA.</text>
</comment>
<comment type="similarity">
    <text evidence="1">Belongs to the bacterial ribosomal protein bS20 family.</text>
</comment>
<protein>
    <recommendedName>
        <fullName evidence="1">Small ribosomal subunit protein bS20</fullName>
    </recommendedName>
    <alternativeName>
        <fullName evidence="3">30S ribosomal protein S20</fullName>
    </alternativeName>
</protein>